<organism>
    <name type="scientific">Haemophilus influenzae (strain ATCC 51907 / DSM 11121 / KW20 / Rd)</name>
    <dbReference type="NCBI Taxonomy" id="71421"/>
    <lineage>
        <taxon>Bacteria</taxon>
        <taxon>Pseudomonadati</taxon>
        <taxon>Pseudomonadota</taxon>
        <taxon>Gammaproteobacteria</taxon>
        <taxon>Pasteurellales</taxon>
        <taxon>Pasteurellaceae</taxon>
        <taxon>Haemophilus</taxon>
    </lineage>
</organism>
<keyword id="KW-0046">Antibiotic resistance</keyword>
<keyword id="KW-0997">Cell inner membrane</keyword>
<keyword id="KW-1003">Cell membrane</keyword>
<keyword id="KW-0472">Membrane</keyword>
<keyword id="KW-1185">Reference proteome</keyword>
<keyword id="KW-0812">Transmembrane</keyword>
<keyword id="KW-1133">Transmembrane helix</keyword>
<keyword id="KW-0813">Transport</keyword>
<feature type="chain" id="PRO_0000173316" description="Bicyclomycin resistance protein homolog">
    <location>
        <begin position="1"/>
        <end position="398"/>
    </location>
</feature>
<feature type="transmembrane region" description="Helical" evidence="2">
    <location>
        <begin position="8"/>
        <end position="28"/>
    </location>
</feature>
<feature type="transmembrane region" description="Helical" evidence="2">
    <location>
        <begin position="52"/>
        <end position="72"/>
    </location>
</feature>
<feature type="transmembrane region" description="Helical" evidence="2">
    <location>
        <begin position="75"/>
        <end position="95"/>
    </location>
</feature>
<feature type="transmembrane region" description="Helical" evidence="2">
    <location>
        <begin position="102"/>
        <end position="122"/>
    </location>
</feature>
<feature type="transmembrane region" description="Helical" evidence="2">
    <location>
        <begin position="137"/>
        <end position="157"/>
    </location>
</feature>
<feature type="transmembrane region" description="Helical" evidence="2">
    <location>
        <begin position="164"/>
        <end position="184"/>
    </location>
</feature>
<feature type="transmembrane region" description="Helical" evidence="2">
    <location>
        <begin position="225"/>
        <end position="245"/>
    </location>
</feature>
<feature type="transmembrane region" description="Helical" evidence="2">
    <location>
        <begin position="247"/>
        <end position="267"/>
    </location>
</feature>
<feature type="transmembrane region" description="Helical" evidence="2">
    <location>
        <begin position="275"/>
        <end position="295"/>
    </location>
</feature>
<feature type="transmembrane region" description="Helical" evidence="2">
    <location>
        <begin position="296"/>
        <end position="316"/>
    </location>
</feature>
<feature type="transmembrane region" description="Helical" evidence="2">
    <location>
        <begin position="343"/>
        <end position="363"/>
    </location>
</feature>
<feature type="transmembrane region" description="Helical" evidence="2">
    <location>
        <begin position="369"/>
        <end position="389"/>
    </location>
</feature>
<name>BCR_HAEIN</name>
<protein>
    <recommendedName>
        <fullName>Bicyclomycin resistance protein homolog</fullName>
    </recommendedName>
</protein>
<dbReference type="EMBL" id="L42023">
    <property type="protein sequence ID" value="AAC22894.1"/>
    <property type="molecule type" value="Genomic_DNA"/>
</dbReference>
<dbReference type="PIR" id="E64112">
    <property type="entry name" value="E64112"/>
</dbReference>
<dbReference type="RefSeq" id="NP_439398.1">
    <property type="nucleotide sequence ID" value="NC_000907.1"/>
</dbReference>
<dbReference type="SMR" id="P45123"/>
<dbReference type="STRING" id="71421.HI_1242"/>
<dbReference type="EnsemblBacteria" id="AAC22894">
    <property type="protein sequence ID" value="AAC22894"/>
    <property type="gene ID" value="HI_1242"/>
</dbReference>
<dbReference type="KEGG" id="hin:HI_1242"/>
<dbReference type="PATRIC" id="fig|71421.8.peg.1294"/>
<dbReference type="eggNOG" id="COG2814">
    <property type="taxonomic scope" value="Bacteria"/>
</dbReference>
<dbReference type="HOGENOM" id="CLU_001265_47_0_6"/>
<dbReference type="OrthoDB" id="9814303at2"/>
<dbReference type="PhylomeDB" id="P45123"/>
<dbReference type="BioCyc" id="HINF71421:G1GJ1-1272-MONOMER"/>
<dbReference type="Proteomes" id="UP000000579">
    <property type="component" value="Chromosome"/>
</dbReference>
<dbReference type="GO" id="GO:0005886">
    <property type="term" value="C:plasma membrane"/>
    <property type="evidence" value="ECO:0000318"/>
    <property type="project" value="GO_Central"/>
</dbReference>
<dbReference type="GO" id="GO:0015385">
    <property type="term" value="F:sodium:proton antiporter activity"/>
    <property type="evidence" value="ECO:0000318"/>
    <property type="project" value="GO_Central"/>
</dbReference>
<dbReference type="GO" id="GO:0042910">
    <property type="term" value="F:xenobiotic transmembrane transporter activity"/>
    <property type="evidence" value="ECO:0007669"/>
    <property type="project" value="InterPro"/>
</dbReference>
<dbReference type="GO" id="GO:0046677">
    <property type="term" value="P:response to antibiotic"/>
    <property type="evidence" value="ECO:0007669"/>
    <property type="project" value="UniProtKB-KW"/>
</dbReference>
<dbReference type="GO" id="GO:1990961">
    <property type="term" value="P:xenobiotic detoxification by transmembrane export across the plasma membrane"/>
    <property type="evidence" value="ECO:0000318"/>
    <property type="project" value="GO_Central"/>
</dbReference>
<dbReference type="CDD" id="cd17320">
    <property type="entry name" value="MFS_MdfA_MDR_like"/>
    <property type="match status" value="1"/>
</dbReference>
<dbReference type="FunFam" id="1.20.1720.10:FF:000005">
    <property type="entry name" value="Bcr/CflA family efflux transporter"/>
    <property type="match status" value="1"/>
</dbReference>
<dbReference type="Gene3D" id="1.20.1720.10">
    <property type="entry name" value="Multidrug resistance protein D"/>
    <property type="match status" value="1"/>
</dbReference>
<dbReference type="InterPro" id="IPR004812">
    <property type="entry name" value="Efflux_drug-R_Bcr/CmlA"/>
</dbReference>
<dbReference type="InterPro" id="IPR011701">
    <property type="entry name" value="MFS"/>
</dbReference>
<dbReference type="InterPro" id="IPR020846">
    <property type="entry name" value="MFS_dom"/>
</dbReference>
<dbReference type="InterPro" id="IPR036259">
    <property type="entry name" value="MFS_trans_sf"/>
</dbReference>
<dbReference type="NCBIfam" id="TIGR00710">
    <property type="entry name" value="efflux_Bcr_CflA"/>
    <property type="match status" value="1"/>
</dbReference>
<dbReference type="NCBIfam" id="NF008314">
    <property type="entry name" value="PRK11102.1"/>
    <property type="match status" value="1"/>
</dbReference>
<dbReference type="PANTHER" id="PTHR23502">
    <property type="entry name" value="MAJOR FACILITATOR SUPERFAMILY"/>
    <property type="match status" value="1"/>
</dbReference>
<dbReference type="PANTHER" id="PTHR23502:SF132">
    <property type="entry name" value="POLYAMINE TRANSPORTER 2-RELATED"/>
    <property type="match status" value="1"/>
</dbReference>
<dbReference type="Pfam" id="PF07690">
    <property type="entry name" value="MFS_1"/>
    <property type="match status" value="1"/>
</dbReference>
<dbReference type="SUPFAM" id="SSF103473">
    <property type="entry name" value="MFS general substrate transporter"/>
    <property type="match status" value="1"/>
</dbReference>
<dbReference type="PROSITE" id="PS50850">
    <property type="entry name" value="MFS"/>
    <property type="match status" value="1"/>
</dbReference>
<comment type="function">
    <text evidence="1">Involved in sulfonamide (sulfathiazole) and bicyclomycin resistance. Probable membrane translocase (By similarity).</text>
</comment>
<comment type="subcellular location">
    <subcellularLocation>
        <location evidence="3">Cell inner membrane</location>
        <topology evidence="3">Multi-pass membrane protein</topology>
    </subcellularLocation>
</comment>
<comment type="similarity">
    <text evidence="3">Belongs to the major facilitator superfamily. Bcr/CmlA family.</text>
</comment>
<accession>P45123</accession>
<sequence>MNQQKSTFIFILTLGILSMLPPFGVDMYLPSFLEIAKDLDVSPEQVQHTLTSFAYGMAFGQLFWGPFGDSFGRKPIILLGVIVGALTALVLTEINSVGNFTALRFVQGFFGAAPVVLSGALLRDLFSKDQLSKVMSTITLVFMLAPLVAPIIGGYIVKFFHWHAIFYVISLVGLLAAALVFFIIPETHKKENRIPLRLNIIARNFLLLWKQKEVLGYMFAASFSFGGLFAFVTAGSIVYIGIYGVPVDQFGYFFMMNIVTMIFASFLNSRFVTKVGAETMLRIALAIQFLSGMWLILTALLDLGFWPMAIGVAFFVGPNPVISSNAMASALERCPQMAGTANSLIGSVRFAVGAIMGSLVASMKMDTAAPMLFTMGACVVISVLAYYFLTSRNLKSRG</sequence>
<evidence type="ECO:0000250" key="1"/>
<evidence type="ECO:0000255" key="2"/>
<evidence type="ECO:0000305" key="3"/>
<reference key="1">
    <citation type="journal article" date="1995" name="Science">
        <title>Whole-genome random sequencing and assembly of Haemophilus influenzae Rd.</title>
        <authorList>
            <person name="Fleischmann R.D."/>
            <person name="Adams M.D."/>
            <person name="White O."/>
            <person name="Clayton R.A."/>
            <person name="Kirkness E.F."/>
            <person name="Kerlavage A.R."/>
            <person name="Bult C.J."/>
            <person name="Tomb J.-F."/>
            <person name="Dougherty B.A."/>
            <person name="Merrick J.M."/>
            <person name="McKenney K."/>
            <person name="Sutton G.G."/>
            <person name="FitzHugh W."/>
            <person name="Fields C.A."/>
            <person name="Gocayne J.D."/>
            <person name="Scott J.D."/>
            <person name="Shirley R."/>
            <person name="Liu L.-I."/>
            <person name="Glodek A."/>
            <person name="Kelley J.M."/>
            <person name="Weidman J.F."/>
            <person name="Phillips C.A."/>
            <person name="Spriggs T."/>
            <person name="Hedblom E."/>
            <person name="Cotton M.D."/>
            <person name="Utterback T.R."/>
            <person name="Hanna M.C."/>
            <person name="Nguyen D.T."/>
            <person name="Saudek D.M."/>
            <person name="Brandon R.C."/>
            <person name="Fine L.D."/>
            <person name="Fritchman J.L."/>
            <person name="Fuhrmann J.L."/>
            <person name="Geoghagen N.S.M."/>
            <person name="Gnehm C.L."/>
            <person name="McDonald L.A."/>
            <person name="Small K.V."/>
            <person name="Fraser C.M."/>
            <person name="Smith H.O."/>
            <person name="Venter J.C."/>
        </authorList>
    </citation>
    <scope>NUCLEOTIDE SEQUENCE [LARGE SCALE GENOMIC DNA]</scope>
    <source>
        <strain>ATCC 51907 / DSM 11121 / KW20 / Rd</strain>
    </source>
</reference>
<proteinExistence type="inferred from homology"/>
<gene>
    <name type="primary">bcr</name>
    <name type="ordered locus">HI_1242</name>
</gene>